<feature type="chain" id="PRO_1000062047" description="High frequency lysogenization protein HflD">
    <location>
        <begin position="1"/>
        <end position="213"/>
    </location>
</feature>
<feature type="coiled-coil region" evidence="1">
    <location>
        <begin position="79"/>
        <end position="126"/>
    </location>
</feature>
<reference key="1">
    <citation type="journal article" date="2008" name="J. Bacteriol.">
        <title>The pangenome structure of Escherichia coli: comparative genomic analysis of E. coli commensal and pathogenic isolates.</title>
        <authorList>
            <person name="Rasko D.A."/>
            <person name="Rosovitz M.J."/>
            <person name="Myers G.S.A."/>
            <person name="Mongodin E.F."/>
            <person name="Fricke W.F."/>
            <person name="Gajer P."/>
            <person name="Crabtree J."/>
            <person name="Sebaihia M."/>
            <person name="Thomson N.R."/>
            <person name="Chaudhuri R."/>
            <person name="Henderson I.R."/>
            <person name="Sperandio V."/>
            <person name="Ravel J."/>
        </authorList>
    </citation>
    <scope>NUCLEOTIDE SEQUENCE [LARGE SCALE GENOMIC DNA]</scope>
    <source>
        <strain>HS</strain>
    </source>
</reference>
<protein>
    <recommendedName>
        <fullName evidence="1">High frequency lysogenization protein HflD</fullName>
    </recommendedName>
</protein>
<comment type="function">
    <text evidence="1">Negative regulator of phage lambda lysogenization. Contributes to the degradation of the phage regulatory protein CII. Acts probably by holding CII on the membrane surface, away from the target promoters, but close to the FtsH protease.</text>
</comment>
<comment type="subunit">
    <text evidence="1">Interacts with CII protein from phage lambda.</text>
</comment>
<comment type="subcellular location">
    <subcellularLocation>
        <location>Cytoplasm</location>
    </subcellularLocation>
    <subcellularLocation>
        <location evidence="1">Cell inner membrane</location>
        <topology evidence="1">Peripheral membrane protein</topology>
        <orientation evidence="1">Cytoplasmic side</orientation>
    </subcellularLocation>
</comment>
<comment type="similarity">
    <text evidence="1">Belongs to the HflD family.</text>
</comment>
<name>HFLD_ECOHS</name>
<organism>
    <name type="scientific">Escherichia coli O9:H4 (strain HS)</name>
    <dbReference type="NCBI Taxonomy" id="331112"/>
    <lineage>
        <taxon>Bacteria</taxon>
        <taxon>Pseudomonadati</taxon>
        <taxon>Pseudomonadota</taxon>
        <taxon>Gammaproteobacteria</taxon>
        <taxon>Enterobacterales</taxon>
        <taxon>Enterobacteriaceae</taxon>
        <taxon>Escherichia</taxon>
    </lineage>
</organism>
<proteinExistence type="inferred from homology"/>
<dbReference type="EMBL" id="CP000802">
    <property type="protein sequence ID" value="ABV05591.1"/>
    <property type="molecule type" value="Genomic_DNA"/>
</dbReference>
<dbReference type="RefSeq" id="WP_001297479.1">
    <property type="nucleotide sequence ID" value="NC_009800.1"/>
</dbReference>
<dbReference type="SMR" id="A7ZZ87"/>
<dbReference type="GeneID" id="93776278"/>
<dbReference type="KEGG" id="ecx:EcHS_A1252"/>
<dbReference type="HOGENOM" id="CLU_098920_0_0_6"/>
<dbReference type="GO" id="GO:0005737">
    <property type="term" value="C:cytoplasm"/>
    <property type="evidence" value="ECO:0007669"/>
    <property type="project" value="UniProtKB-SubCell"/>
</dbReference>
<dbReference type="GO" id="GO:0005886">
    <property type="term" value="C:plasma membrane"/>
    <property type="evidence" value="ECO:0007669"/>
    <property type="project" value="UniProtKB-SubCell"/>
</dbReference>
<dbReference type="FunFam" id="1.10.3890.10:FF:000001">
    <property type="entry name" value="High frequency lysogenization protein HflD homolog"/>
    <property type="match status" value="1"/>
</dbReference>
<dbReference type="Gene3D" id="1.10.3890.10">
    <property type="entry name" value="HflD-like"/>
    <property type="match status" value="1"/>
</dbReference>
<dbReference type="HAMAP" id="MF_00695">
    <property type="entry name" value="HflD_protein"/>
    <property type="match status" value="1"/>
</dbReference>
<dbReference type="InterPro" id="IPR007451">
    <property type="entry name" value="HflD"/>
</dbReference>
<dbReference type="InterPro" id="IPR035932">
    <property type="entry name" value="HflD-like_sf"/>
</dbReference>
<dbReference type="NCBIfam" id="NF001245">
    <property type="entry name" value="PRK00218.1-1"/>
    <property type="match status" value="1"/>
</dbReference>
<dbReference type="NCBIfam" id="NF001246">
    <property type="entry name" value="PRK00218.1-2"/>
    <property type="match status" value="1"/>
</dbReference>
<dbReference type="NCBIfam" id="NF001248">
    <property type="entry name" value="PRK00218.1-4"/>
    <property type="match status" value="1"/>
</dbReference>
<dbReference type="NCBIfam" id="NF001249">
    <property type="entry name" value="PRK00218.1-5"/>
    <property type="match status" value="1"/>
</dbReference>
<dbReference type="PANTHER" id="PTHR38100">
    <property type="entry name" value="HIGH FREQUENCY LYSOGENIZATION PROTEIN HFLD"/>
    <property type="match status" value="1"/>
</dbReference>
<dbReference type="PANTHER" id="PTHR38100:SF1">
    <property type="entry name" value="HIGH FREQUENCY LYSOGENIZATION PROTEIN HFLD"/>
    <property type="match status" value="1"/>
</dbReference>
<dbReference type="Pfam" id="PF04356">
    <property type="entry name" value="DUF489"/>
    <property type="match status" value="1"/>
</dbReference>
<dbReference type="SUPFAM" id="SSF101322">
    <property type="entry name" value="YcfC-like"/>
    <property type="match status" value="1"/>
</dbReference>
<evidence type="ECO:0000255" key="1">
    <source>
        <dbReference type="HAMAP-Rule" id="MF_00695"/>
    </source>
</evidence>
<accession>A7ZZ87</accession>
<keyword id="KW-0997">Cell inner membrane</keyword>
<keyword id="KW-1003">Cell membrane</keyword>
<keyword id="KW-0175">Coiled coil</keyword>
<keyword id="KW-0963">Cytoplasm</keyword>
<keyword id="KW-0472">Membrane</keyword>
<sequence>MAKNYYDITLALAGICQSARLVQQLAHQGHCDADALHVSLNSIIDMNPSSTLAVFGGSEANLRVGLETLLGVLNASSRQGLNAELTRYTLSLMVLERKLSSAKGALDTLGNRINGLQRQLEHFDLQSETLMSAMAAIYVDVISPLGPRIQVTGSPAVLQSPQVQAKVRATLLAGIRAAVLWHQVGGGRLQLMFSRNRLTTQAKQILAHLTPEL</sequence>
<gene>
    <name evidence="1" type="primary">hflD</name>
    <name type="ordered locus">EcHS_A1252</name>
</gene>